<feature type="chain" id="PRO_0000173826" description="Probable 26S proteasome regulatory subunit rpn3">
    <location>
        <begin position="1"/>
        <end position="497"/>
    </location>
</feature>
<feature type="domain" description="PCI" evidence="2">
    <location>
        <begin position="248"/>
        <end position="428"/>
    </location>
</feature>
<feature type="region of interest" description="Disordered" evidence="3">
    <location>
        <begin position="1"/>
        <end position="27"/>
    </location>
</feature>
<feature type="region of interest" description="Disordered" evidence="3">
    <location>
        <begin position="470"/>
        <end position="497"/>
    </location>
</feature>
<feature type="compositionally biased region" description="Basic and acidic residues" evidence="3">
    <location>
        <begin position="470"/>
        <end position="483"/>
    </location>
</feature>
<feature type="compositionally biased region" description="Acidic residues" evidence="3">
    <location>
        <begin position="484"/>
        <end position="497"/>
    </location>
</feature>
<evidence type="ECO:0000250" key="1"/>
<evidence type="ECO:0000255" key="2">
    <source>
        <dbReference type="PROSITE-ProRule" id="PRU01185"/>
    </source>
</evidence>
<evidence type="ECO:0000256" key="3">
    <source>
        <dbReference type="SAM" id="MobiDB-lite"/>
    </source>
</evidence>
<evidence type="ECO:0000305" key="4"/>
<reference key="1">
    <citation type="journal article" date="2002" name="Nature">
        <title>The genome sequence of Schizosaccharomyces pombe.</title>
        <authorList>
            <person name="Wood V."/>
            <person name="Gwilliam R."/>
            <person name="Rajandream M.A."/>
            <person name="Lyne M.H."/>
            <person name="Lyne R."/>
            <person name="Stewart A."/>
            <person name="Sgouros J.G."/>
            <person name="Peat N."/>
            <person name="Hayles J."/>
            <person name="Baker S.G."/>
            <person name="Basham D."/>
            <person name="Bowman S."/>
            <person name="Brooks K."/>
            <person name="Brown D."/>
            <person name="Brown S."/>
            <person name="Chillingworth T."/>
            <person name="Churcher C.M."/>
            <person name="Collins M."/>
            <person name="Connor R."/>
            <person name="Cronin A."/>
            <person name="Davis P."/>
            <person name="Feltwell T."/>
            <person name="Fraser A."/>
            <person name="Gentles S."/>
            <person name="Goble A."/>
            <person name="Hamlin N."/>
            <person name="Harris D.E."/>
            <person name="Hidalgo J."/>
            <person name="Hodgson G."/>
            <person name="Holroyd S."/>
            <person name="Hornsby T."/>
            <person name="Howarth S."/>
            <person name="Huckle E.J."/>
            <person name="Hunt S."/>
            <person name="Jagels K."/>
            <person name="James K.D."/>
            <person name="Jones L."/>
            <person name="Jones M."/>
            <person name="Leather S."/>
            <person name="McDonald S."/>
            <person name="McLean J."/>
            <person name="Mooney P."/>
            <person name="Moule S."/>
            <person name="Mungall K.L."/>
            <person name="Murphy L.D."/>
            <person name="Niblett D."/>
            <person name="Odell C."/>
            <person name="Oliver K."/>
            <person name="O'Neil S."/>
            <person name="Pearson D."/>
            <person name="Quail M.A."/>
            <person name="Rabbinowitsch E."/>
            <person name="Rutherford K.M."/>
            <person name="Rutter S."/>
            <person name="Saunders D."/>
            <person name="Seeger K."/>
            <person name="Sharp S."/>
            <person name="Skelton J."/>
            <person name="Simmonds M.N."/>
            <person name="Squares R."/>
            <person name="Squares S."/>
            <person name="Stevens K."/>
            <person name="Taylor K."/>
            <person name="Taylor R.G."/>
            <person name="Tivey A."/>
            <person name="Walsh S.V."/>
            <person name="Warren T."/>
            <person name="Whitehead S."/>
            <person name="Woodward J.R."/>
            <person name="Volckaert G."/>
            <person name="Aert R."/>
            <person name="Robben J."/>
            <person name="Grymonprez B."/>
            <person name="Weltjens I."/>
            <person name="Vanstreels E."/>
            <person name="Rieger M."/>
            <person name="Schaefer M."/>
            <person name="Mueller-Auer S."/>
            <person name="Gabel C."/>
            <person name="Fuchs M."/>
            <person name="Duesterhoeft A."/>
            <person name="Fritzc C."/>
            <person name="Holzer E."/>
            <person name="Moestl D."/>
            <person name="Hilbert H."/>
            <person name="Borzym K."/>
            <person name="Langer I."/>
            <person name="Beck A."/>
            <person name="Lehrach H."/>
            <person name="Reinhardt R."/>
            <person name="Pohl T.M."/>
            <person name="Eger P."/>
            <person name="Zimmermann W."/>
            <person name="Wedler H."/>
            <person name="Wambutt R."/>
            <person name="Purnelle B."/>
            <person name="Goffeau A."/>
            <person name="Cadieu E."/>
            <person name="Dreano S."/>
            <person name="Gloux S."/>
            <person name="Lelaure V."/>
            <person name="Mottier S."/>
            <person name="Galibert F."/>
            <person name="Aves S.J."/>
            <person name="Xiang Z."/>
            <person name="Hunt C."/>
            <person name="Moore K."/>
            <person name="Hurst S.M."/>
            <person name="Lucas M."/>
            <person name="Rochet M."/>
            <person name="Gaillardin C."/>
            <person name="Tallada V.A."/>
            <person name="Garzon A."/>
            <person name="Thode G."/>
            <person name="Daga R.R."/>
            <person name="Cruzado L."/>
            <person name="Jimenez J."/>
            <person name="Sanchez M."/>
            <person name="del Rey F."/>
            <person name="Benito J."/>
            <person name="Dominguez A."/>
            <person name="Revuelta J.L."/>
            <person name="Moreno S."/>
            <person name="Armstrong J."/>
            <person name="Forsburg S.L."/>
            <person name="Cerutti L."/>
            <person name="Lowe T."/>
            <person name="McCombie W.R."/>
            <person name="Paulsen I."/>
            <person name="Potashkin J."/>
            <person name="Shpakovski G.V."/>
            <person name="Ussery D."/>
            <person name="Barrell B.G."/>
            <person name="Nurse P."/>
        </authorList>
    </citation>
    <scope>NUCLEOTIDE SEQUENCE [LARGE SCALE GENOMIC DNA]</scope>
    <source>
        <strain>972 / ATCC 24843</strain>
    </source>
</reference>
<proteinExistence type="inferred from homology"/>
<name>RPN3_SCHPO</name>
<sequence length="497" mass="57346">MIDDQRDMQVDSVNQEENVDSGETKQNTVTEVPRTVLQDVEANIAALMQATKQRDPRLVYRSLRTTSNICHRLNADVLGQLIKKYYSFDNSLKNELLELIDMPQNGDDSSTSITNGNGNTIFPEVDMYLQLLLSMTLYYNEKYEVGAEYIKKVIARLQSYDRRTLDQIAAKLYFYYILFFEKCNRSVECRNTLLSVHRTASLRHDSETQAMVLTLLLRNYIQFNLYDQADRLVSKTSFLTNASNNLAIRYQYYLGRIRAIQLDYTTAHEHLVSAIRKAPNTVYAVQFLEAVYKLHIVVQLLMGEIPERRIFRQKSLEKTLVPYLRISQAVRIGDLCAFTDALSKYEAEFRFDGLYTLICRLRHTVIKTGLRMISLSYSRISLRDVCIKLGLDSEESAEYIVAKGIRDGVIDASIDHSNAFMASNEAMDIYSTEQPQQAFHERIQFCLALHNDSIKSMRYPMDAHKSELEGVEEARRRMDKEMAEADLDDDEPDLGEF</sequence>
<organism>
    <name type="scientific">Schizosaccharomyces pombe (strain 972 / ATCC 24843)</name>
    <name type="common">Fission yeast</name>
    <dbReference type="NCBI Taxonomy" id="284812"/>
    <lineage>
        <taxon>Eukaryota</taxon>
        <taxon>Fungi</taxon>
        <taxon>Dikarya</taxon>
        <taxon>Ascomycota</taxon>
        <taxon>Taphrinomycotina</taxon>
        <taxon>Schizosaccharomycetes</taxon>
        <taxon>Schizosaccharomycetales</taxon>
        <taxon>Schizosaccharomycetaceae</taxon>
        <taxon>Schizosaccharomyces</taxon>
    </lineage>
</organism>
<accession>O42897</accession>
<keyword id="KW-0647">Proteasome</keyword>
<keyword id="KW-1185">Reference proteome</keyword>
<gene>
    <name type="primary">rpn3</name>
    <name type="ORF">SPBC119.01</name>
    <name type="ORF">SPBPJ4664.07</name>
</gene>
<protein>
    <recommendedName>
        <fullName>Probable 26S proteasome regulatory subunit rpn3</fullName>
    </recommendedName>
</protein>
<dbReference type="EMBL" id="CU329671">
    <property type="protein sequence ID" value="CAC38352.2"/>
    <property type="molecule type" value="Genomic_DNA"/>
</dbReference>
<dbReference type="PIR" id="T39299">
    <property type="entry name" value="T39299"/>
</dbReference>
<dbReference type="RefSeq" id="NP_595282.2">
    <property type="nucleotide sequence ID" value="NM_001021189.2"/>
</dbReference>
<dbReference type="SMR" id="O42897"/>
<dbReference type="BioGRID" id="276646">
    <property type="interactions" value="12"/>
</dbReference>
<dbReference type="ComplexPortal" id="CPX-9077">
    <property type="entry name" value="26S proteasome complex"/>
</dbReference>
<dbReference type="FunCoup" id="O42897">
    <property type="interactions" value="625"/>
</dbReference>
<dbReference type="IntAct" id="O42897">
    <property type="interactions" value="1"/>
</dbReference>
<dbReference type="STRING" id="284812.O42897"/>
<dbReference type="iPTMnet" id="O42897"/>
<dbReference type="PaxDb" id="4896-SPBC119.01.1"/>
<dbReference type="EnsemblFungi" id="SPBC119.01.1">
    <property type="protein sequence ID" value="SPBC119.01.1:pep"/>
    <property type="gene ID" value="SPBC119.01"/>
</dbReference>
<dbReference type="GeneID" id="2540109"/>
<dbReference type="KEGG" id="spo:2540109"/>
<dbReference type="PomBase" id="SPBC119.01">
    <property type="gene designation" value="rpn3"/>
</dbReference>
<dbReference type="VEuPathDB" id="FungiDB:SPBC119.01"/>
<dbReference type="eggNOG" id="KOG2581">
    <property type="taxonomic scope" value="Eukaryota"/>
</dbReference>
<dbReference type="HOGENOM" id="CLU_019858_1_2_1"/>
<dbReference type="InParanoid" id="O42897"/>
<dbReference type="OMA" id="AKLWFYI"/>
<dbReference type="PhylomeDB" id="O42897"/>
<dbReference type="Reactome" id="R-SPO-1236978">
    <property type="pathway name" value="Cross-presentation of soluble exogenous antigens (endosomes)"/>
</dbReference>
<dbReference type="Reactome" id="R-SPO-350562">
    <property type="pathway name" value="Regulation of ornithine decarboxylase (ODC)"/>
</dbReference>
<dbReference type="Reactome" id="R-SPO-5687128">
    <property type="pathway name" value="MAPK6/MAPK4 signaling"/>
</dbReference>
<dbReference type="Reactome" id="R-SPO-5689603">
    <property type="pathway name" value="UCH proteinases"/>
</dbReference>
<dbReference type="Reactome" id="R-SPO-5689880">
    <property type="pathway name" value="Ub-specific processing proteases"/>
</dbReference>
<dbReference type="Reactome" id="R-SPO-6798695">
    <property type="pathway name" value="Neutrophil degranulation"/>
</dbReference>
<dbReference type="Reactome" id="R-SPO-68949">
    <property type="pathway name" value="Orc1 removal from chromatin"/>
</dbReference>
<dbReference type="Reactome" id="R-SPO-69017">
    <property type="pathway name" value="CDK-mediated phosphorylation and removal of Cdc6"/>
</dbReference>
<dbReference type="Reactome" id="R-SPO-69601">
    <property type="pathway name" value="Ubiquitin Mediated Degradation of Phosphorylated Cdc25A"/>
</dbReference>
<dbReference type="Reactome" id="R-SPO-75815">
    <property type="pathway name" value="Ubiquitin-dependent degradation of Cyclin D"/>
</dbReference>
<dbReference type="Reactome" id="R-SPO-8854050">
    <property type="pathway name" value="FBXL7 down-regulates AURKA during mitotic entry and in early mitosis"/>
</dbReference>
<dbReference type="Reactome" id="R-SPO-8948751">
    <property type="pathway name" value="Regulation of PTEN stability and activity"/>
</dbReference>
<dbReference type="Reactome" id="R-SPO-8951664">
    <property type="pathway name" value="Neddylation"/>
</dbReference>
<dbReference type="Reactome" id="R-SPO-9755511">
    <property type="pathway name" value="KEAP1-NFE2L2 pathway"/>
</dbReference>
<dbReference type="Reactome" id="R-SPO-983168">
    <property type="pathway name" value="Antigen processing: Ubiquitination &amp; Proteasome degradation"/>
</dbReference>
<dbReference type="Reactome" id="R-SPO-9907900">
    <property type="pathway name" value="Proteasome assembly"/>
</dbReference>
<dbReference type="PRO" id="PR:O42897"/>
<dbReference type="Proteomes" id="UP000002485">
    <property type="component" value="Chromosome II"/>
</dbReference>
<dbReference type="GO" id="GO:0005634">
    <property type="term" value="C:nucleus"/>
    <property type="evidence" value="ECO:0000304"/>
    <property type="project" value="PomBase"/>
</dbReference>
<dbReference type="GO" id="GO:0008541">
    <property type="term" value="C:proteasome regulatory particle, lid subcomplex"/>
    <property type="evidence" value="ECO:0000314"/>
    <property type="project" value="PomBase"/>
</dbReference>
<dbReference type="GO" id="GO:0030234">
    <property type="term" value="F:enzyme regulator activity"/>
    <property type="evidence" value="ECO:0007669"/>
    <property type="project" value="InterPro"/>
</dbReference>
<dbReference type="GO" id="GO:0043161">
    <property type="term" value="P:proteasome-mediated ubiquitin-dependent protein catabolic process"/>
    <property type="evidence" value="ECO:0000305"/>
    <property type="project" value="PomBase"/>
</dbReference>
<dbReference type="GO" id="GO:0042176">
    <property type="term" value="P:regulation of protein catabolic process"/>
    <property type="evidence" value="ECO:0007669"/>
    <property type="project" value="InterPro"/>
</dbReference>
<dbReference type="GO" id="GO:0006511">
    <property type="term" value="P:ubiquitin-dependent protein catabolic process"/>
    <property type="evidence" value="ECO:0000318"/>
    <property type="project" value="GO_Central"/>
</dbReference>
<dbReference type="InterPro" id="IPR013586">
    <property type="entry name" value="26S_Psome_reg_C"/>
</dbReference>
<dbReference type="InterPro" id="IPR050756">
    <property type="entry name" value="CSN3"/>
</dbReference>
<dbReference type="InterPro" id="IPR000717">
    <property type="entry name" value="PCI_dom"/>
</dbReference>
<dbReference type="InterPro" id="IPR036390">
    <property type="entry name" value="WH_DNA-bd_sf"/>
</dbReference>
<dbReference type="PANTHER" id="PTHR10758:SF2">
    <property type="entry name" value="26S PROTEASOME NON-ATPASE REGULATORY SUBUNIT 3"/>
    <property type="match status" value="1"/>
</dbReference>
<dbReference type="PANTHER" id="PTHR10758">
    <property type="entry name" value="26S PROTEASOME NON-ATPASE REGULATORY SUBUNIT 3/COP9 SIGNALOSOME COMPLEX SUBUNIT 3"/>
    <property type="match status" value="1"/>
</dbReference>
<dbReference type="Pfam" id="PF01399">
    <property type="entry name" value="PCI"/>
    <property type="match status" value="1"/>
</dbReference>
<dbReference type="Pfam" id="PF08375">
    <property type="entry name" value="Rpn3_C"/>
    <property type="match status" value="1"/>
</dbReference>
<dbReference type="SMART" id="SM00753">
    <property type="entry name" value="PAM"/>
    <property type="match status" value="1"/>
</dbReference>
<dbReference type="SMART" id="SM00088">
    <property type="entry name" value="PINT"/>
    <property type="match status" value="1"/>
</dbReference>
<dbReference type="SUPFAM" id="SSF46785">
    <property type="entry name" value="Winged helix' DNA-binding domain"/>
    <property type="match status" value="1"/>
</dbReference>
<dbReference type="PROSITE" id="PS50250">
    <property type="entry name" value="PCI"/>
    <property type="match status" value="1"/>
</dbReference>
<comment type="function">
    <text evidence="1">Acts as a regulatory subunit of the 26 proteasome which is involved in the ATP-dependent degradation of ubiquitinated proteins.</text>
</comment>
<comment type="subunit">
    <text evidence="1">The 26S proteasome is composed of a core protease, known as the 20S proteasome, capped at one or both ends by the 19S regulatory complex (RC). The RC is composed of at least 18 different subunits in two subcomplexes, the base and the lid, which form the portions proximal and distal to the 20S proteolytic core, respectively (By similarity).</text>
</comment>
<comment type="similarity">
    <text evidence="4">Belongs to the proteasome subunit S3 family.</text>
</comment>